<evidence type="ECO:0000255" key="1">
    <source>
        <dbReference type="HAMAP-Rule" id="MF_01603"/>
    </source>
</evidence>
<name>HLDE_SALG2</name>
<comment type="function">
    <text evidence="1">Catalyzes the phosphorylation of D-glycero-D-manno-heptose 7-phosphate at the C-1 position to selectively form D-glycero-beta-D-manno-heptose-1,7-bisphosphate.</text>
</comment>
<comment type="function">
    <text evidence="1">Catalyzes the ADP transfer from ATP to D-glycero-beta-D-manno-heptose 1-phosphate, yielding ADP-D-glycero-beta-D-manno-heptose.</text>
</comment>
<comment type="catalytic activity">
    <reaction evidence="1">
        <text>D-glycero-beta-D-manno-heptose 7-phosphate + ATP = D-glycero-beta-D-manno-heptose 1,7-bisphosphate + ADP + H(+)</text>
        <dbReference type="Rhea" id="RHEA:27473"/>
        <dbReference type="ChEBI" id="CHEBI:15378"/>
        <dbReference type="ChEBI" id="CHEBI:30616"/>
        <dbReference type="ChEBI" id="CHEBI:60204"/>
        <dbReference type="ChEBI" id="CHEBI:60208"/>
        <dbReference type="ChEBI" id="CHEBI:456216"/>
        <dbReference type="EC" id="2.7.1.167"/>
    </reaction>
</comment>
<comment type="catalytic activity">
    <reaction evidence="1">
        <text>D-glycero-beta-D-manno-heptose 1-phosphate + ATP + H(+) = ADP-D-glycero-beta-D-manno-heptose + diphosphate</text>
        <dbReference type="Rhea" id="RHEA:27465"/>
        <dbReference type="ChEBI" id="CHEBI:15378"/>
        <dbReference type="ChEBI" id="CHEBI:30616"/>
        <dbReference type="ChEBI" id="CHEBI:33019"/>
        <dbReference type="ChEBI" id="CHEBI:59967"/>
        <dbReference type="ChEBI" id="CHEBI:61593"/>
        <dbReference type="EC" id="2.7.7.70"/>
    </reaction>
</comment>
<comment type="pathway">
    <text evidence="1">Nucleotide-sugar biosynthesis; ADP-L-glycero-beta-D-manno-heptose biosynthesis; ADP-L-glycero-beta-D-manno-heptose from D-glycero-beta-D-manno-heptose 7-phosphate: step 1/4.</text>
</comment>
<comment type="pathway">
    <text evidence="1">Nucleotide-sugar biosynthesis; ADP-L-glycero-beta-D-manno-heptose biosynthesis; ADP-L-glycero-beta-D-manno-heptose from D-glycero-beta-D-manno-heptose 7-phosphate: step 3/4.</text>
</comment>
<comment type="subunit">
    <text evidence="1">Homodimer.</text>
</comment>
<comment type="similarity">
    <text evidence="1">In the N-terminal section; belongs to the carbohydrate kinase PfkB family.</text>
</comment>
<comment type="similarity">
    <text evidence="1">In the C-terminal section; belongs to the cytidylyltransferase family.</text>
</comment>
<keyword id="KW-0067">ATP-binding</keyword>
<keyword id="KW-0119">Carbohydrate metabolism</keyword>
<keyword id="KW-0418">Kinase</keyword>
<keyword id="KW-0511">Multifunctional enzyme</keyword>
<keyword id="KW-0547">Nucleotide-binding</keyword>
<keyword id="KW-0548">Nucleotidyltransferase</keyword>
<keyword id="KW-0808">Transferase</keyword>
<organism>
    <name type="scientific">Salmonella gallinarum (strain 287/91 / NCTC 13346)</name>
    <dbReference type="NCBI Taxonomy" id="550538"/>
    <lineage>
        <taxon>Bacteria</taxon>
        <taxon>Pseudomonadati</taxon>
        <taxon>Pseudomonadota</taxon>
        <taxon>Gammaproteobacteria</taxon>
        <taxon>Enterobacterales</taxon>
        <taxon>Enterobacteriaceae</taxon>
        <taxon>Salmonella</taxon>
    </lineage>
</organism>
<accession>B5REF8</accession>
<sequence length="477" mass="51110">MKVNLPAFERAGVMVVGDVMLDRYWYGPTCRISPEAPVPVVKVNTVEERPGGAANVAMNIASLGANARLVGLTGIDDAARALSKTLAEVNVKCDFVSVPTHPTITKLRVLSRNQQLIRLDFEEGFEGVDPQPLHERINQALGSIGALVLSDYAKGALTSVQTMISLARQAGVPVLIDPKGTDFERYRGATLLTPNLSEFEAVAGKCKSEDELVERGMKLIADYDLSALLVTRSEQGMTLLQPNKAPLHMPTQAQEVYDVTGAGDTVIGVLAATLAAGNTLEEACYFANAAAGVVVGKLGTSTVSPIELENAVRGRADTGFGVMTEEELRQAVASARKRGEKVVMTNGVFDILHAGHVSYLANARKLGDRLIVAVNSDASTKRLKGDSRPVNPLEQRMIVLGALESVDWVVSFEEDTPQRLIAGILPDLLVKGGDYKPEEIAGSEEVWANGGEVMVLNFEDGCSTTNIIKKIQTESEK</sequence>
<proteinExistence type="inferred from homology"/>
<reference key="1">
    <citation type="journal article" date="2008" name="Genome Res.">
        <title>Comparative genome analysis of Salmonella enteritidis PT4 and Salmonella gallinarum 287/91 provides insights into evolutionary and host adaptation pathways.</title>
        <authorList>
            <person name="Thomson N.R."/>
            <person name="Clayton D.J."/>
            <person name="Windhorst D."/>
            <person name="Vernikos G."/>
            <person name="Davidson S."/>
            <person name="Churcher C."/>
            <person name="Quail M.A."/>
            <person name="Stevens M."/>
            <person name="Jones M.A."/>
            <person name="Watson M."/>
            <person name="Barron A."/>
            <person name="Layton A."/>
            <person name="Pickard D."/>
            <person name="Kingsley R.A."/>
            <person name="Bignell A."/>
            <person name="Clark L."/>
            <person name="Harris B."/>
            <person name="Ormond D."/>
            <person name="Abdellah Z."/>
            <person name="Brooks K."/>
            <person name="Cherevach I."/>
            <person name="Chillingworth T."/>
            <person name="Woodward J."/>
            <person name="Norberczak H."/>
            <person name="Lord A."/>
            <person name="Arrowsmith C."/>
            <person name="Jagels K."/>
            <person name="Moule S."/>
            <person name="Mungall K."/>
            <person name="Saunders M."/>
            <person name="Whitehead S."/>
            <person name="Chabalgoity J.A."/>
            <person name="Maskell D."/>
            <person name="Humphreys T."/>
            <person name="Roberts M."/>
            <person name="Barrow P.A."/>
            <person name="Dougan G."/>
            <person name="Parkhill J."/>
        </authorList>
    </citation>
    <scope>NUCLEOTIDE SEQUENCE [LARGE SCALE GENOMIC DNA]</scope>
    <source>
        <strain>287/91 / NCTC 13346</strain>
    </source>
</reference>
<feature type="chain" id="PRO_1000185817" description="Bifunctional protein HldE">
    <location>
        <begin position="1"/>
        <end position="477"/>
    </location>
</feature>
<feature type="region of interest" description="Ribokinase">
    <location>
        <begin position="1"/>
        <end position="318"/>
    </location>
</feature>
<feature type="region of interest" description="Cytidylyltransferase">
    <location>
        <begin position="344"/>
        <end position="477"/>
    </location>
</feature>
<feature type="active site" evidence="1">
    <location>
        <position position="264"/>
    </location>
</feature>
<feature type="binding site" evidence="1">
    <location>
        <begin position="195"/>
        <end position="198"/>
    </location>
    <ligand>
        <name>ATP</name>
        <dbReference type="ChEBI" id="CHEBI:30616"/>
    </ligand>
</feature>
<protein>
    <recommendedName>
        <fullName evidence="1">Bifunctional protein HldE</fullName>
    </recommendedName>
    <domain>
        <recommendedName>
            <fullName evidence="1">D-beta-D-heptose 7-phosphate kinase</fullName>
            <ecNumber evidence="1">2.7.1.167</ecNumber>
        </recommendedName>
        <alternativeName>
            <fullName evidence="1">D-beta-D-heptose 7-phosphotransferase</fullName>
        </alternativeName>
        <alternativeName>
            <fullName evidence="1">D-glycero-beta-D-manno-heptose-7-phosphate kinase</fullName>
        </alternativeName>
    </domain>
    <domain>
        <recommendedName>
            <fullName evidence="1">D-beta-D-heptose 1-phosphate adenylyltransferase</fullName>
            <ecNumber evidence="1">2.7.7.70</ecNumber>
        </recommendedName>
        <alternativeName>
            <fullName evidence="1">D-glycero-beta-D-manno-heptose 1-phosphate adenylyltransferase</fullName>
        </alternativeName>
    </domain>
</protein>
<dbReference type="EC" id="2.7.1.167" evidence="1"/>
<dbReference type="EC" id="2.7.7.70" evidence="1"/>
<dbReference type="EMBL" id="AM933173">
    <property type="protein sequence ID" value="CAR38897.1"/>
    <property type="molecule type" value="Genomic_DNA"/>
</dbReference>
<dbReference type="RefSeq" id="WP_000867680.1">
    <property type="nucleotide sequence ID" value="NC_011274.1"/>
</dbReference>
<dbReference type="SMR" id="B5REF8"/>
<dbReference type="KEGG" id="seg:SG3096"/>
<dbReference type="HOGENOM" id="CLU_021150_2_1_6"/>
<dbReference type="UniPathway" id="UPA00356">
    <property type="reaction ID" value="UER00437"/>
</dbReference>
<dbReference type="UniPathway" id="UPA00356">
    <property type="reaction ID" value="UER00439"/>
</dbReference>
<dbReference type="Proteomes" id="UP000008321">
    <property type="component" value="Chromosome"/>
</dbReference>
<dbReference type="GO" id="GO:0005829">
    <property type="term" value="C:cytosol"/>
    <property type="evidence" value="ECO:0007669"/>
    <property type="project" value="TreeGrafter"/>
</dbReference>
<dbReference type="GO" id="GO:0005524">
    <property type="term" value="F:ATP binding"/>
    <property type="evidence" value="ECO:0007669"/>
    <property type="project" value="UniProtKB-UniRule"/>
</dbReference>
<dbReference type="GO" id="GO:0033785">
    <property type="term" value="F:heptose 7-phosphate kinase activity"/>
    <property type="evidence" value="ECO:0007669"/>
    <property type="project" value="UniProtKB-UniRule"/>
</dbReference>
<dbReference type="GO" id="GO:0033786">
    <property type="term" value="F:heptose-1-phosphate adenylyltransferase activity"/>
    <property type="evidence" value="ECO:0007669"/>
    <property type="project" value="UniProtKB-UniRule"/>
</dbReference>
<dbReference type="GO" id="GO:0016773">
    <property type="term" value="F:phosphotransferase activity, alcohol group as acceptor"/>
    <property type="evidence" value="ECO:0007669"/>
    <property type="project" value="InterPro"/>
</dbReference>
<dbReference type="GO" id="GO:0097171">
    <property type="term" value="P:ADP-L-glycero-beta-D-manno-heptose biosynthetic process"/>
    <property type="evidence" value="ECO:0007669"/>
    <property type="project" value="UniProtKB-UniPathway"/>
</dbReference>
<dbReference type="CDD" id="cd01172">
    <property type="entry name" value="RfaE_like"/>
    <property type="match status" value="1"/>
</dbReference>
<dbReference type="FunFam" id="3.40.1190.20:FF:000002">
    <property type="entry name" value="Bifunctional protein HldE"/>
    <property type="match status" value="1"/>
</dbReference>
<dbReference type="FunFam" id="3.40.50.620:FF:000028">
    <property type="entry name" value="Bifunctional protein HldE"/>
    <property type="match status" value="1"/>
</dbReference>
<dbReference type="Gene3D" id="3.40.1190.20">
    <property type="match status" value="1"/>
</dbReference>
<dbReference type="Gene3D" id="3.40.50.620">
    <property type="entry name" value="HUPs"/>
    <property type="match status" value="1"/>
</dbReference>
<dbReference type="HAMAP" id="MF_01603">
    <property type="entry name" value="HldE"/>
    <property type="match status" value="1"/>
</dbReference>
<dbReference type="InterPro" id="IPR023030">
    <property type="entry name" value="Bifunc_HldE"/>
</dbReference>
<dbReference type="InterPro" id="IPR002173">
    <property type="entry name" value="Carboh/pur_kinase_PfkB_CS"/>
</dbReference>
<dbReference type="InterPro" id="IPR004821">
    <property type="entry name" value="Cyt_trans-like"/>
</dbReference>
<dbReference type="InterPro" id="IPR011611">
    <property type="entry name" value="PfkB_dom"/>
</dbReference>
<dbReference type="InterPro" id="IPR011913">
    <property type="entry name" value="RfaE_dom_I"/>
</dbReference>
<dbReference type="InterPro" id="IPR011914">
    <property type="entry name" value="RfaE_dom_II"/>
</dbReference>
<dbReference type="InterPro" id="IPR029056">
    <property type="entry name" value="Ribokinase-like"/>
</dbReference>
<dbReference type="InterPro" id="IPR014729">
    <property type="entry name" value="Rossmann-like_a/b/a_fold"/>
</dbReference>
<dbReference type="NCBIfam" id="TIGR00125">
    <property type="entry name" value="cyt_tran_rel"/>
    <property type="match status" value="1"/>
</dbReference>
<dbReference type="NCBIfam" id="NF008454">
    <property type="entry name" value="PRK11316.1"/>
    <property type="match status" value="1"/>
</dbReference>
<dbReference type="NCBIfam" id="TIGR02198">
    <property type="entry name" value="rfaE_dom_I"/>
    <property type="match status" value="1"/>
</dbReference>
<dbReference type="NCBIfam" id="TIGR02199">
    <property type="entry name" value="rfaE_dom_II"/>
    <property type="match status" value="1"/>
</dbReference>
<dbReference type="PANTHER" id="PTHR46969">
    <property type="entry name" value="BIFUNCTIONAL PROTEIN HLDE"/>
    <property type="match status" value="1"/>
</dbReference>
<dbReference type="PANTHER" id="PTHR46969:SF1">
    <property type="entry name" value="BIFUNCTIONAL PROTEIN HLDE"/>
    <property type="match status" value="1"/>
</dbReference>
<dbReference type="Pfam" id="PF01467">
    <property type="entry name" value="CTP_transf_like"/>
    <property type="match status" value="1"/>
</dbReference>
<dbReference type="Pfam" id="PF00294">
    <property type="entry name" value="PfkB"/>
    <property type="match status" value="1"/>
</dbReference>
<dbReference type="SUPFAM" id="SSF52374">
    <property type="entry name" value="Nucleotidylyl transferase"/>
    <property type="match status" value="1"/>
</dbReference>
<dbReference type="SUPFAM" id="SSF53613">
    <property type="entry name" value="Ribokinase-like"/>
    <property type="match status" value="1"/>
</dbReference>
<dbReference type="PROSITE" id="PS00583">
    <property type="entry name" value="PFKB_KINASES_1"/>
    <property type="match status" value="1"/>
</dbReference>
<gene>
    <name evidence="1" type="primary">hldE</name>
    <name type="ordered locus">SG3096</name>
</gene>